<evidence type="ECO:0000255" key="1">
    <source>
        <dbReference type="HAMAP-Rule" id="MF_00184"/>
    </source>
</evidence>
<evidence type="ECO:0000255" key="2">
    <source>
        <dbReference type="PROSITE-ProRule" id="PRU01228"/>
    </source>
</evidence>
<organism>
    <name type="scientific">Xanthomonas campestris pv. campestris (strain ATCC 33913 / DSM 3586 / NCPPB 528 / LMG 568 / P 25)</name>
    <dbReference type="NCBI Taxonomy" id="190485"/>
    <lineage>
        <taxon>Bacteria</taxon>
        <taxon>Pseudomonadati</taxon>
        <taxon>Pseudomonadota</taxon>
        <taxon>Gammaproteobacteria</taxon>
        <taxon>Lysobacterales</taxon>
        <taxon>Lysobacteraceae</taxon>
        <taxon>Xanthomonas</taxon>
    </lineage>
</organism>
<comment type="function">
    <text evidence="1">Catalyzes the attachment of threonine to tRNA(Thr) in a two-step reaction: L-threonine is first activated by ATP to form Thr-AMP and then transferred to the acceptor end of tRNA(Thr). Also edits incorrectly charged L-seryl-tRNA(Thr).</text>
</comment>
<comment type="catalytic activity">
    <reaction evidence="1">
        <text>tRNA(Thr) + L-threonine + ATP = L-threonyl-tRNA(Thr) + AMP + diphosphate + H(+)</text>
        <dbReference type="Rhea" id="RHEA:24624"/>
        <dbReference type="Rhea" id="RHEA-COMP:9670"/>
        <dbReference type="Rhea" id="RHEA-COMP:9704"/>
        <dbReference type="ChEBI" id="CHEBI:15378"/>
        <dbReference type="ChEBI" id="CHEBI:30616"/>
        <dbReference type="ChEBI" id="CHEBI:33019"/>
        <dbReference type="ChEBI" id="CHEBI:57926"/>
        <dbReference type="ChEBI" id="CHEBI:78442"/>
        <dbReference type="ChEBI" id="CHEBI:78534"/>
        <dbReference type="ChEBI" id="CHEBI:456215"/>
        <dbReference type="EC" id="6.1.1.3"/>
    </reaction>
</comment>
<comment type="cofactor">
    <cofactor evidence="1">
        <name>Zn(2+)</name>
        <dbReference type="ChEBI" id="CHEBI:29105"/>
    </cofactor>
    <text evidence="1">Binds 1 zinc ion per subunit.</text>
</comment>
<comment type="subunit">
    <text evidence="1">Homodimer.</text>
</comment>
<comment type="subcellular location">
    <subcellularLocation>
        <location evidence="1">Cytoplasm</location>
    </subcellularLocation>
</comment>
<comment type="similarity">
    <text evidence="1">Belongs to the class-II aminoacyl-tRNA synthetase family.</text>
</comment>
<keyword id="KW-0030">Aminoacyl-tRNA synthetase</keyword>
<keyword id="KW-0067">ATP-binding</keyword>
<keyword id="KW-0963">Cytoplasm</keyword>
<keyword id="KW-0436">Ligase</keyword>
<keyword id="KW-0479">Metal-binding</keyword>
<keyword id="KW-0547">Nucleotide-binding</keyword>
<keyword id="KW-0648">Protein biosynthesis</keyword>
<keyword id="KW-1185">Reference proteome</keyword>
<keyword id="KW-0694">RNA-binding</keyword>
<keyword id="KW-0820">tRNA-binding</keyword>
<keyword id="KW-0862">Zinc</keyword>
<gene>
    <name evidence="1" type="primary">thrS</name>
    <name type="ordered locus">XCC2463</name>
</gene>
<reference key="1">
    <citation type="journal article" date="2002" name="Nature">
        <title>Comparison of the genomes of two Xanthomonas pathogens with differing host specificities.</title>
        <authorList>
            <person name="da Silva A.C.R."/>
            <person name="Ferro J.A."/>
            <person name="Reinach F.C."/>
            <person name="Farah C.S."/>
            <person name="Furlan L.R."/>
            <person name="Quaggio R.B."/>
            <person name="Monteiro-Vitorello C.B."/>
            <person name="Van Sluys M.A."/>
            <person name="Almeida N.F. Jr."/>
            <person name="Alves L.M.C."/>
            <person name="do Amaral A.M."/>
            <person name="Bertolini M.C."/>
            <person name="Camargo L.E.A."/>
            <person name="Camarotte G."/>
            <person name="Cannavan F."/>
            <person name="Cardozo J."/>
            <person name="Chambergo F."/>
            <person name="Ciapina L.P."/>
            <person name="Cicarelli R.M.B."/>
            <person name="Coutinho L.L."/>
            <person name="Cursino-Santos J.R."/>
            <person name="El-Dorry H."/>
            <person name="Faria J.B."/>
            <person name="Ferreira A.J.S."/>
            <person name="Ferreira R.C.C."/>
            <person name="Ferro M.I.T."/>
            <person name="Formighieri E.F."/>
            <person name="Franco M.C."/>
            <person name="Greggio C.C."/>
            <person name="Gruber A."/>
            <person name="Katsuyama A.M."/>
            <person name="Kishi L.T."/>
            <person name="Leite R.P."/>
            <person name="Lemos E.G.M."/>
            <person name="Lemos M.V.F."/>
            <person name="Locali E.C."/>
            <person name="Machado M.A."/>
            <person name="Madeira A.M.B.N."/>
            <person name="Martinez-Rossi N.M."/>
            <person name="Martins E.C."/>
            <person name="Meidanis J."/>
            <person name="Menck C.F.M."/>
            <person name="Miyaki C.Y."/>
            <person name="Moon D.H."/>
            <person name="Moreira L.M."/>
            <person name="Novo M.T.M."/>
            <person name="Okura V.K."/>
            <person name="Oliveira M.C."/>
            <person name="Oliveira V.R."/>
            <person name="Pereira H.A."/>
            <person name="Rossi A."/>
            <person name="Sena J.A.D."/>
            <person name="Silva C."/>
            <person name="de Souza R.F."/>
            <person name="Spinola L.A.F."/>
            <person name="Takita M.A."/>
            <person name="Tamura R.E."/>
            <person name="Teixeira E.C."/>
            <person name="Tezza R.I.D."/>
            <person name="Trindade dos Santos M."/>
            <person name="Truffi D."/>
            <person name="Tsai S.M."/>
            <person name="White F.F."/>
            <person name="Setubal J.C."/>
            <person name="Kitajima J.P."/>
        </authorList>
    </citation>
    <scope>NUCLEOTIDE SEQUENCE [LARGE SCALE GENOMIC DNA]</scope>
    <source>
        <strain>ATCC 33913 / DSM 3586 / NCPPB 528 / LMG 568 / P 25</strain>
    </source>
</reference>
<feature type="chain" id="PRO_0000101090" description="Threonine--tRNA ligase">
    <location>
        <begin position="1"/>
        <end position="636"/>
    </location>
</feature>
<feature type="domain" description="TGS" evidence="2">
    <location>
        <begin position="1"/>
        <end position="63"/>
    </location>
</feature>
<feature type="region of interest" description="Catalytic" evidence="1">
    <location>
        <begin position="245"/>
        <end position="536"/>
    </location>
</feature>
<feature type="binding site" evidence="1">
    <location>
        <position position="336"/>
    </location>
    <ligand>
        <name>Zn(2+)</name>
        <dbReference type="ChEBI" id="CHEBI:29105"/>
    </ligand>
</feature>
<feature type="binding site" evidence="1">
    <location>
        <position position="387"/>
    </location>
    <ligand>
        <name>Zn(2+)</name>
        <dbReference type="ChEBI" id="CHEBI:29105"/>
    </ligand>
</feature>
<feature type="binding site" evidence="1">
    <location>
        <position position="513"/>
    </location>
    <ligand>
        <name>Zn(2+)</name>
        <dbReference type="ChEBI" id="CHEBI:29105"/>
    </ligand>
</feature>
<protein>
    <recommendedName>
        <fullName evidence="1">Threonine--tRNA ligase</fullName>
        <ecNumber evidence="1">6.1.1.3</ecNumber>
    </recommendedName>
    <alternativeName>
        <fullName evidence="1">Threonyl-tRNA synthetase</fullName>
        <shortName evidence="1">ThrRS</shortName>
    </alternativeName>
</protein>
<name>SYT_XANCP</name>
<proteinExistence type="inferred from homology"/>
<sequence>MPMITITLPDGSRREFDAPVSVMQVAQSIGAGLAKATIAGQVDGQLVDASDLIEHDASLRIITAKDAEGVEIIRHSCAHLVGHAVKQLYPDVKMVIGPVIAEGFYYDIYSERPFTPEDMAAIEQRMQQLIAQDYDVIKKVTPRAEVIEVFAQRGEEYKLRLIEDMSDDITAMGLYYHQEYVDMCRGPHVPNTRFLKAFKLTRISGAYWRGDAKNEQLQRIYGTAWADKKQLDAYILRMEEADKRDHRKIGKAQDLFHLQEEAPGLVFWHPKGWSLWQVVEQYMRKVYRDSGYGEVRCPQILDVSLWQKSGHWDNYQDAMFFTESEKRTYAVKPMNCPGHVQVFNQGLHSYRDLPIRYGEFGACHRNEPSGALHGILRVRGFTQDDGHVFCLESQIEAEVTAFHQQALAVYTAFGFDDIQIKIALRPEKRLGDDATWDKAEAALRSALGVCGVEWQELPGEGAFYGPKIEYHLKDAIGRTWQLGTMQVDFMMPGRLGAEYVDEHSQKKHPVMLHRAIVGSMERFIGILIEHHAGAFPAWLAPVQVVVANITDAQAEYVDSVRKTLANQGFRVSADLRNEKIGYKIREHTLQRVPYLLVVGDREKENGAVAVRTRSGEDLGTMTVSAFIERLQAEQAA</sequence>
<dbReference type="EC" id="6.1.1.3" evidence="1"/>
<dbReference type="EMBL" id="AE008922">
    <property type="protein sequence ID" value="AAM41739.1"/>
    <property type="molecule type" value="Genomic_DNA"/>
</dbReference>
<dbReference type="RefSeq" id="NP_637815.1">
    <property type="nucleotide sequence ID" value="NC_003902.1"/>
</dbReference>
<dbReference type="SMR" id="Q8P7Z2"/>
<dbReference type="STRING" id="190485.XCC2463"/>
<dbReference type="EnsemblBacteria" id="AAM41739">
    <property type="protein sequence ID" value="AAM41739"/>
    <property type="gene ID" value="XCC2463"/>
</dbReference>
<dbReference type="KEGG" id="xcc:XCC2463"/>
<dbReference type="PATRIC" id="fig|190485.4.peg.2626"/>
<dbReference type="eggNOG" id="COG0441">
    <property type="taxonomic scope" value="Bacteria"/>
</dbReference>
<dbReference type="HOGENOM" id="CLU_008554_0_1_6"/>
<dbReference type="OrthoDB" id="9802304at2"/>
<dbReference type="Proteomes" id="UP000001010">
    <property type="component" value="Chromosome"/>
</dbReference>
<dbReference type="GO" id="GO:0005829">
    <property type="term" value="C:cytosol"/>
    <property type="evidence" value="ECO:0000318"/>
    <property type="project" value="GO_Central"/>
</dbReference>
<dbReference type="GO" id="GO:0005524">
    <property type="term" value="F:ATP binding"/>
    <property type="evidence" value="ECO:0007669"/>
    <property type="project" value="UniProtKB-UniRule"/>
</dbReference>
<dbReference type="GO" id="GO:0046872">
    <property type="term" value="F:metal ion binding"/>
    <property type="evidence" value="ECO:0007669"/>
    <property type="project" value="UniProtKB-KW"/>
</dbReference>
<dbReference type="GO" id="GO:0004829">
    <property type="term" value="F:threonine-tRNA ligase activity"/>
    <property type="evidence" value="ECO:0000318"/>
    <property type="project" value="GO_Central"/>
</dbReference>
<dbReference type="GO" id="GO:0000049">
    <property type="term" value="F:tRNA binding"/>
    <property type="evidence" value="ECO:0007669"/>
    <property type="project" value="UniProtKB-KW"/>
</dbReference>
<dbReference type="GO" id="GO:0006435">
    <property type="term" value="P:threonyl-tRNA aminoacylation"/>
    <property type="evidence" value="ECO:0000318"/>
    <property type="project" value="GO_Central"/>
</dbReference>
<dbReference type="CDD" id="cd01667">
    <property type="entry name" value="TGS_ThrRS"/>
    <property type="match status" value="1"/>
</dbReference>
<dbReference type="CDD" id="cd00860">
    <property type="entry name" value="ThrRS_anticodon"/>
    <property type="match status" value="1"/>
</dbReference>
<dbReference type="CDD" id="cd00771">
    <property type="entry name" value="ThrRS_core"/>
    <property type="match status" value="1"/>
</dbReference>
<dbReference type="FunFam" id="3.10.20.30:FF:000005">
    <property type="entry name" value="Threonine--tRNA ligase"/>
    <property type="match status" value="1"/>
</dbReference>
<dbReference type="FunFam" id="3.30.54.20:FF:000002">
    <property type="entry name" value="Threonine--tRNA ligase"/>
    <property type="match status" value="1"/>
</dbReference>
<dbReference type="FunFam" id="3.30.930.10:FF:000002">
    <property type="entry name" value="Threonine--tRNA ligase"/>
    <property type="match status" value="1"/>
</dbReference>
<dbReference type="FunFam" id="3.40.50.800:FF:000001">
    <property type="entry name" value="Threonine--tRNA ligase"/>
    <property type="match status" value="1"/>
</dbReference>
<dbReference type="FunFam" id="3.30.980.10:FF:000005">
    <property type="entry name" value="Threonyl-tRNA synthetase, mitochondrial"/>
    <property type="match status" value="1"/>
</dbReference>
<dbReference type="Gene3D" id="3.10.20.30">
    <property type="match status" value="1"/>
</dbReference>
<dbReference type="Gene3D" id="3.30.54.20">
    <property type="match status" value="1"/>
</dbReference>
<dbReference type="Gene3D" id="3.40.50.800">
    <property type="entry name" value="Anticodon-binding domain"/>
    <property type="match status" value="1"/>
</dbReference>
<dbReference type="Gene3D" id="3.30.930.10">
    <property type="entry name" value="Bira Bifunctional Protein, Domain 2"/>
    <property type="match status" value="1"/>
</dbReference>
<dbReference type="Gene3D" id="3.30.980.10">
    <property type="entry name" value="Threonyl-trna Synthetase, Chain A, domain 2"/>
    <property type="match status" value="1"/>
</dbReference>
<dbReference type="HAMAP" id="MF_00184">
    <property type="entry name" value="Thr_tRNA_synth"/>
    <property type="match status" value="1"/>
</dbReference>
<dbReference type="InterPro" id="IPR002314">
    <property type="entry name" value="aa-tRNA-synt_IIb"/>
</dbReference>
<dbReference type="InterPro" id="IPR006195">
    <property type="entry name" value="aa-tRNA-synth_II"/>
</dbReference>
<dbReference type="InterPro" id="IPR045864">
    <property type="entry name" value="aa-tRNA-synth_II/BPL/LPL"/>
</dbReference>
<dbReference type="InterPro" id="IPR004154">
    <property type="entry name" value="Anticodon-bd"/>
</dbReference>
<dbReference type="InterPro" id="IPR036621">
    <property type="entry name" value="Anticodon-bd_dom_sf"/>
</dbReference>
<dbReference type="InterPro" id="IPR012675">
    <property type="entry name" value="Beta-grasp_dom_sf"/>
</dbReference>
<dbReference type="InterPro" id="IPR004095">
    <property type="entry name" value="TGS"/>
</dbReference>
<dbReference type="InterPro" id="IPR012676">
    <property type="entry name" value="TGS-like"/>
</dbReference>
<dbReference type="InterPro" id="IPR002320">
    <property type="entry name" value="Thr-tRNA-ligase_IIa"/>
</dbReference>
<dbReference type="InterPro" id="IPR018163">
    <property type="entry name" value="Thr/Ala-tRNA-synth_IIc_edit"/>
</dbReference>
<dbReference type="InterPro" id="IPR047246">
    <property type="entry name" value="ThrRS_anticodon"/>
</dbReference>
<dbReference type="InterPro" id="IPR033728">
    <property type="entry name" value="ThrRS_core"/>
</dbReference>
<dbReference type="InterPro" id="IPR012947">
    <property type="entry name" value="tRNA_SAD"/>
</dbReference>
<dbReference type="NCBIfam" id="TIGR00418">
    <property type="entry name" value="thrS"/>
    <property type="match status" value="1"/>
</dbReference>
<dbReference type="PANTHER" id="PTHR11451:SF44">
    <property type="entry name" value="THREONINE--TRNA LIGASE, CHLOROPLASTIC_MITOCHONDRIAL 2"/>
    <property type="match status" value="1"/>
</dbReference>
<dbReference type="PANTHER" id="PTHR11451">
    <property type="entry name" value="THREONINE-TRNA LIGASE"/>
    <property type="match status" value="1"/>
</dbReference>
<dbReference type="Pfam" id="PF03129">
    <property type="entry name" value="HGTP_anticodon"/>
    <property type="match status" value="1"/>
</dbReference>
<dbReference type="Pfam" id="PF02824">
    <property type="entry name" value="TGS"/>
    <property type="match status" value="1"/>
</dbReference>
<dbReference type="Pfam" id="PF00587">
    <property type="entry name" value="tRNA-synt_2b"/>
    <property type="match status" value="1"/>
</dbReference>
<dbReference type="Pfam" id="PF07973">
    <property type="entry name" value="tRNA_SAD"/>
    <property type="match status" value="1"/>
</dbReference>
<dbReference type="PRINTS" id="PR01047">
    <property type="entry name" value="TRNASYNTHTHR"/>
</dbReference>
<dbReference type="SMART" id="SM00863">
    <property type="entry name" value="tRNA_SAD"/>
    <property type="match status" value="1"/>
</dbReference>
<dbReference type="SUPFAM" id="SSF52954">
    <property type="entry name" value="Class II aaRS ABD-related"/>
    <property type="match status" value="1"/>
</dbReference>
<dbReference type="SUPFAM" id="SSF55681">
    <property type="entry name" value="Class II aaRS and biotin synthetases"/>
    <property type="match status" value="1"/>
</dbReference>
<dbReference type="SUPFAM" id="SSF81271">
    <property type="entry name" value="TGS-like"/>
    <property type="match status" value="1"/>
</dbReference>
<dbReference type="SUPFAM" id="SSF55186">
    <property type="entry name" value="ThrRS/AlaRS common domain"/>
    <property type="match status" value="1"/>
</dbReference>
<dbReference type="PROSITE" id="PS50862">
    <property type="entry name" value="AA_TRNA_LIGASE_II"/>
    <property type="match status" value="1"/>
</dbReference>
<dbReference type="PROSITE" id="PS51880">
    <property type="entry name" value="TGS"/>
    <property type="match status" value="1"/>
</dbReference>
<accession>Q8P7Z2</accession>